<proteinExistence type="inferred from homology"/>
<sequence length="462" mass="52051">MSKLWGGRFTEEAEAWVEEFGASISFDQQLVNQDINGSIAHVTMLAKQGIVTKEEAEKIKIGLQYLLEEAKQNKLHFSVEAEDIHLNIEKMLIEKIGEVGGKLHTGRSRNDQVATDMHLYLKEKVERIIKATKQLQTVLVHQAENNIETIMPGYTHLQRAQPISFAHHILAYFWMLERDVNRYEDSLKRINISPLGAGALAGTTFPIDREYSAELLGLNGIYENSLDAVSDRDFILEFLSNSSILMMHLSRFCEELILWSSQEFQFIEMSDQYATGSSIMPQKKNPDMAELIRGKTGRVYGNLFSLLTVMKGLPLAYNKDLQEDKEGMFDTVKTVEGCLHIMAGMLETMTVNKEKMGQAVTKDFSNATEIADYLASKGLPFRQAHEIVGKLVLHCTQKGIYLVDVPLETYKEMSLLFEEDLYEVLSPYAAVKRRNSAGGTGFEQIKKALEKAKGLVGEFVGS</sequence>
<gene>
    <name evidence="1" type="primary">argH</name>
    <name type="ordered locus">BALH_4209</name>
</gene>
<reference key="1">
    <citation type="journal article" date="2007" name="J. Bacteriol.">
        <title>The complete genome sequence of Bacillus thuringiensis Al Hakam.</title>
        <authorList>
            <person name="Challacombe J.F."/>
            <person name="Altherr M.R."/>
            <person name="Xie G."/>
            <person name="Bhotika S.S."/>
            <person name="Brown N."/>
            <person name="Bruce D."/>
            <person name="Campbell C.S."/>
            <person name="Campbell M.L."/>
            <person name="Chen J."/>
            <person name="Chertkov O."/>
            <person name="Cleland C."/>
            <person name="Dimitrijevic M."/>
            <person name="Doggett N.A."/>
            <person name="Fawcett J.J."/>
            <person name="Glavina T."/>
            <person name="Goodwin L.A."/>
            <person name="Green L.D."/>
            <person name="Han C.S."/>
            <person name="Hill K.K."/>
            <person name="Hitchcock P."/>
            <person name="Jackson P.J."/>
            <person name="Keim P."/>
            <person name="Kewalramani A.R."/>
            <person name="Longmire J."/>
            <person name="Lucas S."/>
            <person name="Malfatti S."/>
            <person name="Martinez D."/>
            <person name="McMurry K."/>
            <person name="Meincke L.J."/>
            <person name="Misra M."/>
            <person name="Moseman B.L."/>
            <person name="Mundt M."/>
            <person name="Munk A.C."/>
            <person name="Okinaka R.T."/>
            <person name="Parson-Quintana B."/>
            <person name="Reilly L.P."/>
            <person name="Richardson P."/>
            <person name="Robinson D.L."/>
            <person name="Saunders E."/>
            <person name="Tapia R."/>
            <person name="Tesmer J.G."/>
            <person name="Thayer N."/>
            <person name="Thompson L.S."/>
            <person name="Tice H."/>
            <person name="Ticknor L.O."/>
            <person name="Wills P.L."/>
            <person name="Gilna P."/>
            <person name="Brettin T.S."/>
        </authorList>
    </citation>
    <scope>NUCLEOTIDE SEQUENCE [LARGE SCALE GENOMIC DNA]</scope>
    <source>
        <strain>Al Hakam</strain>
    </source>
</reference>
<protein>
    <recommendedName>
        <fullName evidence="1">Argininosuccinate lyase</fullName>
        <shortName evidence="1">ASAL</shortName>
        <ecNumber evidence="1">4.3.2.1</ecNumber>
    </recommendedName>
    <alternativeName>
        <fullName evidence="1">Arginosuccinase</fullName>
    </alternativeName>
</protein>
<feature type="chain" id="PRO_0000321431" description="Argininosuccinate lyase">
    <location>
        <begin position="1"/>
        <end position="462"/>
    </location>
</feature>
<accession>A0RJM3</accession>
<dbReference type="EC" id="4.3.2.1" evidence="1"/>
<dbReference type="EMBL" id="CP000485">
    <property type="protein sequence ID" value="ABK87416.1"/>
    <property type="molecule type" value="Genomic_DNA"/>
</dbReference>
<dbReference type="RefSeq" id="WP_000041271.1">
    <property type="nucleotide sequence ID" value="NC_008600.1"/>
</dbReference>
<dbReference type="SMR" id="A0RJM3"/>
<dbReference type="KEGG" id="btl:BALH_4209"/>
<dbReference type="HOGENOM" id="CLU_027272_2_3_9"/>
<dbReference type="UniPathway" id="UPA00068">
    <property type="reaction ID" value="UER00114"/>
</dbReference>
<dbReference type="GO" id="GO:0005829">
    <property type="term" value="C:cytosol"/>
    <property type="evidence" value="ECO:0007669"/>
    <property type="project" value="TreeGrafter"/>
</dbReference>
<dbReference type="GO" id="GO:0004056">
    <property type="term" value="F:argininosuccinate lyase activity"/>
    <property type="evidence" value="ECO:0007669"/>
    <property type="project" value="UniProtKB-UniRule"/>
</dbReference>
<dbReference type="GO" id="GO:0042450">
    <property type="term" value="P:arginine biosynthetic process via ornithine"/>
    <property type="evidence" value="ECO:0007669"/>
    <property type="project" value="InterPro"/>
</dbReference>
<dbReference type="GO" id="GO:0006526">
    <property type="term" value="P:L-arginine biosynthetic process"/>
    <property type="evidence" value="ECO:0007669"/>
    <property type="project" value="UniProtKB-UniRule"/>
</dbReference>
<dbReference type="CDD" id="cd01359">
    <property type="entry name" value="Argininosuccinate_lyase"/>
    <property type="match status" value="1"/>
</dbReference>
<dbReference type="FunFam" id="1.10.275.10:FF:000002">
    <property type="entry name" value="Argininosuccinate lyase"/>
    <property type="match status" value="1"/>
</dbReference>
<dbReference type="FunFam" id="1.10.40.30:FF:000001">
    <property type="entry name" value="Argininosuccinate lyase"/>
    <property type="match status" value="1"/>
</dbReference>
<dbReference type="FunFam" id="1.20.200.10:FF:000006">
    <property type="entry name" value="Argininosuccinate lyase"/>
    <property type="match status" value="1"/>
</dbReference>
<dbReference type="Gene3D" id="1.10.40.30">
    <property type="entry name" value="Fumarase/aspartase (C-terminal domain)"/>
    <property type="match status" value="1"/>
</dbReference>
<dbReference type="Gene3D" id="1.20.200.10">
    <property type="entry name" value="Fumarase/aspartase (Central domain)"/>
    <property type="match status" value="1"/>
</dbReference>
<dbReference type="Gene3D" id="1.10.275.10">
    <property type="entry name" value="Fumarase/aspartase (N-terminal domain)"/>
    <property type="match status" value="1"/>
</dbReference>
<dbReference type="HAMAP" id="MF_00006">
    <property type="entry name" value="Arg_succ_lyase"/>
    <property type="match status" value="1"/>
</dbReference>
<dbReference type="InterPro" id="IPR029419">
    <property type="entry name" value="Arg_succ_lyase_C"/>
</dbReference>
<dbReference type="InterPro" id="IPR009049">
    <property type="entry name" value="Argininosuccinate_lyase"/>
</dbReference>
<dbReference type="InterPro" id="IPR024083">
    <property type="entry name" value="Fumarase/histidase_N"/>
</dbReference>
<dbReference type="InterPro" id="IPR020557">
    <property type="entry name" value="Fumarate_lyase_CS"/>
</dbReference>
<dbReference type="InterPro" id="IPR000362">
    <property type="entry name" value="Fumarate_lyase_fam"/>
</dbReference>
<dbReference type="InterPro" id="IPR022761">
    <property type="entry name" value="Fumarate_lyase_N"/>
</dbReference>
<dbReference type="InterPro" id="IPR008948">
    <property type="entry name" value="L-Aspartase-like"/>
</dbReference>
<dbReference type="NCBIfam" id="TIGR00838">
    <property type="entry name" value="argH"/>
    <property type="match status" value="1"/>
</dbReference>
<dbReference type="PANTHER" id="PTHR43814">
    <property type="entry name" value="ARGININOSUCCINATE LYASE"/>
    <property type="match status" value="1"/>
</dbReference>
<dbReference type="PANTHER" id="PTHR43814:SF1">
    <property type="entry name" value="ARGININOSUCCINATE LYASE"/>
    <property type="match status" value="1"/>
</dbReference>
<dbReference type="Pfam" id="PF14698">
    <property type="entry name" value="ASL_C2"/>
    <property type="match status" value="1"/>
</dbReference>
<dbReference type="Pfam" id="PF00206">
    <property type="entry name" value="Lyase_1"/>
    <property type="match status" value="1"/>
</dbReference>
<dbReference type="PRINTS" id="PR00145">
    <property type="entry name" value="ARGSUCLYASE"/>
</dbReference>
<dbReference type="PRINTS" id="PR00149">
    <property type="entry name" value="FUMRATELYASE"/>
</dbReference>
<dbReference type="SUPFAM" id="SSF48557">
    <property type="entry name" value="L-aspartase-like"/>
    <property type="match status" value="1"/>
</dbReference>
<dbReference type="PROSITE" id="PS00163">
    <property type="entry name" value="FUMARATE_LYASES"/>
    <property type="match status" value="1"/>
</dbReference>
<comment type="catalytic activity">
    <reaction evidence="1">
        <text>2-(N(omega)-L-arginino)succinate = fumarate + L-arginine</text>
        <dbReference type="Rhea" id="RHEA:24020"/>
        <dbReference type="ChEBI" id="CHEBI:29806"/>
        <dbReference type="ChEBI" id="CHEBI:32682"/>
        <dbReference type="ChEBI" id="CHEBI:57472"/>
        <dbReference type="EC" id="4.3.2.1"/>
    </reaction>
</comment>
<comment type="pathway">
    <text evidence="1">Amino-acid biosynthesis; L-arginine biosynthesis; L-arginine from L-ornithine and carbamoyl phosphate: step 3/3.</text>
</comment>
<comment type="subcellular location">
    <subcellularLocation>
        <location evidence="1">Cytoplasm</location>
    </subcellularLocation>
</comment>
<comment type="similarity">
    <text evidence="1">Belongs to the lyase 1 family. Argininosuccinate lyase subfamily.</text>
</comment>
<evidence type="ECO:0000255" key="1">
    <source>
        <dbReference type="HAMAP-Rule" id="MF_00006"/>
    </source>
</evidence>
<name>ARLY_BACAH</name>
<keyword id="KW-0028">Amino-acid biosynthesis</keyword>
<keyword id="KW-0055">Arginine biosynthesis</keyword>
<keyword id="KW-0963">Cytoplasm</keyword>
<keyword id="KW-0456">Lyase</keyword>
<organism>
    <name type="scientific">Bacillus thuringiensis (strain Al Hakam)</name>
    <dbReference type="NCBI Taxonomy" id="412694"/>
    <lineage>
        <taxon>Bacteria</taxon>
        <taxon>Bacillati</taxon>
        <taxon>Bacillota</taxon>
        <taxon>Bacilli</taxon>
        <taxon>Bacillales</taxon>
        <taxon>Bacillaceae</taxon>
        <taxon>Bacillus</taxon>
        <taxon>Bacillus cereus group</taxon>
    </lineage>
</organism>